<organism>
    <name type="scientific">Aspergillus oryzae (strain ATCC 42149 / RIB 40)</name>
    <name type="common">Yellow koji mold</name>
    <dbReference type="NCBI Taxonomy" id="510516"/>
    <lineage>
        <taxon>Eukaryota</taxon>
        <taxon>Fungi</taxon>
        <taxon>Dikarya</taxon>
        <taxon>Ascomycota</taxon>
        <taxon>Pezizomycotina</taxon>
        <taxon>Eurotiomycetes</taxon>
        <taxon>Eurotiomycetidae</taxon>
        <taxon>Eurotiales</taxon>
        <taxon>Aspergillaceae</taxon>
        <taxon>Aspergillus</taxon>
        <taxon>Aspergillus subgen. Circumdati</taxon>
    </lineage>
</organism>
<feature type="chain" id="PRO_0000339315" description="Conserved oligomeric Golgi complex subunit 6">
    <location>
        <begin position="1"/>
        <end position="812"/>
    </location>
</feature>
<feature type="region of interest" description="Disordered" evidence="2">
    <location>
        <begin position="77"/>
        <end position="100"/>
    </location>
</feature>
<feature type="region of interest" description="Disordered" evidence="2">
    <location>
        <begin position="665"/>
        <end position="688"/>
    </location>
</feature>
<feature type="compositionally biased region" description="Low complexity" evidence="2">
    <location>
        <begin position="77"/>
        <end position="96"/>
    </location>
</feature>
<feature type="compositionally biased region" description="Basic and acidic residues" evidence="2">
    <location>
        <begin position="671"/>
        <end position="680"/>
    </location>
</feature>
<protein>
    <recommendedName>
        <fullName>Conserved oligomeric Golgi complex subunit 6</fullName>
        <shortName>COG complex subunit 6</shortName>
    </recommendedName>
    <alternativeName>
        <fullName>Component of oligomeric Golgi complex 6</fullName>
    </alternativeName>
</protein>
<evidence type="ECO:0000250" key="1"/>
<evidence type="ECO:0000256" key="2">
    <source>
        <dbReference type="SAM" id="MobiDB-lite"/>
    </source>
</evidence>
<evidence type="ECO:0000305" key="3"/>
<keyword id="KW-0333">Golgi apparatus</keyword>
<keyword id="KW-0472">Membrane</keyword>
<keyword id="KW-0653">Protein transport</keyword>
<keyword id="KW-1185">Reference proteome</keyword>
<keyword id="KW-0813">Transport</keyword>
<gene>
    <name type="primary">cog6</name>
    <name type="ORF">AO090009000163</name>
</gene>
<dbReference type="EMBL" id="BA000049">
    <property type="protein sequence ID" value="BAE54662.1"/>
    <property type="molecule type" value="Genomic_DNA"/>
</dbReference>
<dbReference type="SMR" id="Q2UUV3"/>
<dbReference type="STRING" id="510516.Q2UUV3"/>
<dbReference type="EnsemblFungi" id="BAE54662">
    <property type="protein sequence ID" value="BAE54662"/>
    <property type="gene ID" value="AO090009000163"/>
</dbReference>
<dbReference type="VEuPathDB" id="FungiDB:AO090009000163"/>
<dbReference type="HOGENOM" id="CLU_011361_3_0_1"/>
<dbReference type="OMA" id="HSCLDFF"/>
<dbReference type="Proteomes" id="UP000006564">
    <property type="component" value="Chromosome 1"/>
</dbReference>
<dbReference type="GO" id="GO:0000139">
    <property type="term" value="C:Golgi membrane"/>
    <property type="evidence" value="ECO:0007669"/>
    <property type="project" value="UniProtKB-SubCell"/>
</dbReference>
<dbReference type="GO" id="GO:0017119">
    <property type="term" value="C:Golgi transport complex"/>
    <property type="evidence" value="ECO:0007669"/>
    <property type="project" value="InterPro"/>
</dbReference>
<dbReference type="GO" id="GO:0006891">
    <property type="term" value="P:intra-Golgi vesicle-mediated transport"/>
    <property type="evidence" value="ECO:0007669"/>
    <property type="project" value="InterPro"/>
</dbReference>
<dbReference type="GO" id="GO:0015031">
    <property type="term" value="P:protein transport"/>
    <property type="evidence" value="ECO:0007669"/>
    <property type="project" value="UniProtKB-KW"/>
</dbReference>
<dbReference type="InterPro" id="IPR010490">
    <property type="entry name" value="COG6"/>
</dbReference>
<dbReference type="InterPro" id="IPR048369">
    <property type="entry name" value="COG6_C"/>
</dbReference>
<dbReference type="InterPro" id="IPR048368">
    <property type="entry name" value="COG6_N"/>
</dbReference>
<dbReference type="PANTHER" id="PTHR21506">
    <property type="entry name" value="COMPONENT OF OLIGOMERIC GOLGI COMPLEX 6"/>
    <property type="match status" value="1"/>
</dbReference>
<dbReference type="PANTHER" id="PTHR21506:SF0">
    <property type="entry name" value="CONSERVED OLIGOMERIC GOLGI COMPLEX SUBUNIT 6"/>
    <property type="match status" value="1"/>
</dbReference>
<dbReference type="Pfam" id="PF20653">
    <property type="entry name" value="COG6_C"/>
    <property type="match status" value="1"/>
</dbReference>
<dbReference type="Pfam" id="PF06419">
    <property type="entry name" value="COG6_N"/>
    <property type="match status" value="1"/>
</dbReference>
<dbReference type="SMART" id="SM01087">
    <property type="entry name" value="COG6"/>
    <property type="match status" value="1"/>
</dbReference>
<proteinExistence type="inferred from homology"/>
<accession>Q2UUV3</accession>
<comment type="function">
    <text evidence="1">Acts as a component of the peripheral membrane COG complex that is involved in intra-Golgi protein trafficking. COG is located at the cis-Golgi, and regulates tethering of retrograde intra-Golgi vesicles and possibly a number of other membrane trafficking events (By similarity).</text>
</comment>
<comment type="subcellular location">
    <subcellularLocation>
        <location evidence="1">Golgi apparatus membrane</location>
        <topology evidence="1">Peripheral membrane protein</topology>
    </subcellularLocation>
</comment>
<comment type="similarity">
    <text evidence="3">Belongs to the COG6 family.</text>
</comment>
<sequence>MDLENNTIHCSTFVQHTYIKLNPVGPIGAGRLPETRSVEEAQQYPTGWKFWLTILTMSALVVLGGLDTNIVATAVPSHASTRTPSPAASPLSPPATQRSSALTNRLTSVLSASYADSDIRDALETLSLRDIHNTPEVRRQLRLDVQKEVVDCNAEIVRDFGKVAEQLKRIGTVITSLNQTCDEMRKHISLARQDTAPVLEEASTLMNQKKEAETKQQLLDAFTKHFVVPDDDILVLTSLEDPINDQFFEVLARVKQVHRDCEALLGGENQRLGLELMDKSSRNLNSAYQKLYRWIQKEFKSLNLEDPRISSSIRRALRVLAERPSLFHSCLDFFAEARDYTLSDAFHYALTDAVSGTAGDSNVKPIEFSAHDPLRYIGDMLAWVHSTTVSEREALEALFVADGEELARGIQAGLSSEPWSRIDEHEEVAFDGQKALSDLVNRDLIGVSRALRQRVELVIQGHDDPVTCYKVVGLLSFYRTTFQKLLGPNSNLAELLVTLEKFTFGHFEALMKDVVSSLSTDHLALTPSEDLSTPQFLIDALEGLTSLMKTYEASFGADDTESTSDENRFTPVLRAAFDPFLELATSSAEELSNATARAIYLTNIHLTARTSVSEYSFVSTTHLNPISTKLSSLRIDLLEIQHRYLLDESGLQVLLTALEPFSPSSVAKSSTETEKQDSHPLESQPQQQPNLADIATLPAFQPEALIAVSQQLDDFLPSALMDATDNLKRLRSAAFVKSVTEEAVEAFCRDFEFVEGMIIGADEARGKVDVTRVDRGSETGAESEKGMEEGENGWGLRRLFPRTTGEIRVLLS</sequence>
<name>COG6_ASPOR</name>
<reference key="1">
    <citation type="journal article" date="2005" name="Nature">
        <title>Genome sequencing and analysis of Aspergillus oryzae.</title>
        <authorList>
            <person name="Machida M."/>
            <person name="Asai K."/>
            <person name="Sano M."/>
            <person name="Tanaka T."/>
            <person name="Kumagai T."/>
            <person name="Terai G."/>
            <person name="Kusumoto K."/>
            <person name="Arima T."/>
            <person name="Akita O."/>
            <person name="Kashiwagi Y."/>
            <person name="Abe K."/>
            <person name="Gomi K."/>
            <person name="Horiuchi H."/>
            <person name="Kitamoto K."/>
            <person name="Kobayashi T."/>
            <person name="Takeuchi M."/>
            <person name="Denning D.W."/>
            <person name="Galagan J.E."/>
            <person name="Nierman W.C."/>
            <person name="Yu J."/>
            <person name="Archer D.B."/>
            <person name="Bennett J.W."/>
            <person name="Bhatnagar D."/>
            <person name="Cleveland T.E."/>
            <person name="Fedorova N.D."/>
            <person name="Gotoh O."/>
            <person name="Horikawa H."/>
            <person name="Hosoyama A."/>
            <person name="Ichinomiya M."/>
            <person name="Igarashi R."/>
            <person name="Iwashita K."/>
            <person name="Juvvadi P.R."/>
            <person name="Kato M."/>
            <person name="Kato Y."/>
            <person name="Kin T."/>
            <person name="Kokubun A."/>
            <person name="Maeda H."/>
            <person name="Maeyama N."/>
            <person name="Maruyama J."/>
            <person name="Nagasaki H."/>
            <person name="Nakajima T."/>
            <person name="Oda K."/>
            <person name="Okada K."/>
            <person name="Paulsen I."/>
            <person name="Sakamoto K."/>
            <person name="Sawano T."/>
            <person name="Takahashi M."/>
            <person name="Takase K."/>
            <person name="Terabayashi Y."/>
            <person name="Wortman J.R."/>
            <person name="Yamada O."/>
            <person name="Yamagata Y."/>
            <person name="Anazawa H."/>
            <person name="Hata Y."/>
            <person name="Koide Y."/>
            <person name="Komori T."/>
            <person name="Koyama Y."/>
            <person name="Minetoki T."/>
            <person name="Suharnan S."/>
            <person name="Tanaka A."/>
            <person name="Isono K."/>
            <person name="Kuhara S."/>
            <person name="Ogasawara N."/>
            <person name="Kikuchi H."/>
        </authorList>
    </citation>
    <scope>NUCLEOTIDE SEQUENCE [LARGE SCALE GENOMIC DNA]</scope>
    <source>
        <strain>ATCC 42149 / RIB 40</strain>
    </source>
</reference>